<accession>B8CV40</accession>
<keyword id="KW-0963">Cytoplasm</keyword>
<keyword id="KW-0489">Methyltransferase</keyword>
<keyword id="KW-0698">rRNA processing</keyword>
<keyword id="KW-0949">S-adenosyl-L-methionine</keyword>
<keyword id="KW-0808">Transferase</keyword>
<proteinExistence type="inferred from homology"/>
<reference key="1">
    <citation type="journal article" date="2008" name="PLoS ONE">
        <title>Environmental adaptation: genomic analysis of the piezotolerant and psychrotolerant deep-sea iron reducing bacterium Shewanella piezotolerans WP3.</title>
        <authorList>
            <person name="Wang F."/>
            <person name="Wang J."/>
            <person name="Jian H."/>
            <person name="Zhang B."/>
            <person name="Li S."/>
            <person name="Wang F."/>
            <person name="Zeng X."/>
            <person name="Gao L."/>
            <person name="Bartlett D.H."/>
            <person name="Yu J."/>
            <person name="Hu S."/>
            <person name="Xiao X."/>
        </authorList>
    </citation>
    <scope>NUCLEOTIDE SEQUENCE [LARGE SCALE GENOMIC DNA]</scope>
    <source>
        <strain>WP3 / JCM 13877</strain>
    </source>
</reference>
<protein>
    <recommendedName>
        <fullName evidence="1">Ribosomal RNA small subunit methyltransferase J</fullName>
        <ecNumber evidence="1">2.1.1.242</ecNumber>
    </recommendedName>
    <alternativeName>
        <fullName evidence="1">16S rRNA m2G1516 methyltransferase</fullName>
    </alternativeName>
    <alternativeName>
        <fullName evidence="1">rRNA (guanine-N(2)-)-methyltransferase</fullName>
    </alternativeName>
</protein>
<comment type="function">
    <text evidence="1">Specifically methylates the guanosine in position 1516 of 16S rRNA.</text>
</comment>
<comment type="catalytic activity">
    <reaction evidence="1">
        <text>guanosine(1516) in 16S rRNA + S-adenosyl-L-methionine = N(2)-methylguanosine(1516) in 16S rRNA + S-adenosyl-L-homocysteine + H(+)</text>
        <dbReference type="Rhea" id="RHEA:43220"/>
        <dbReference type="Rhea" id="RHEA-COMP:10412"/>
        <dbReference type="Rhea" id="RHEA-COMP:10413"/>
        <dbReference type="ChEBI" id="CHEBI:15378"/>
        <dbReference type="ChEBI" id="CHEBI:57856"/>
        <dbReference type="ChEBI" id="CHEBI:59789"/>
        <dbReference type="ChEBI" id="CHEBI:74269"/>
        <dbReference type="ChEBI" id="CHEBI:74481"/>
        <dbReference type="EC" id="2.1.1.242"/>
    </reaction>
</comment>
<comment type="subcellular location">
    <subcellularLocation>
        <location evidence="1">Cytoplasm</location>
    </subcellularLocation>
</comment>
<comment type="similarity">
    <text evidence="1">Belongs to the methyltransferase superfamily. RsmJ family.</text>
</comment>
<sequence>MVMGVIIIGSIFIKQSLIVTSIFFNQQYPTLESVAERWGLTYSKDAEFELVFENNILSLIKRDEPKLKGISVDFVSGAVAHRRKFGGGRGQSIAKAVGLKQGVTPTVVDGTAGLGRDAFVLASLGCKVIMVERHPVVAALLEDGLRRAYEDSEIGEWMNARMSLFHGSSIDTLADAANAAGTEIDVVYLDPMYPHREKSALVKKEMRVFQSLVGADLDADGLLKPAMELASKRVVVKRPDYAEDLDGVKPSTVIATKKNRFDVYVKAAMIS</sequence>
<name>RSMJ_SHEPW</name>
<evidence type="ECO:0000255" key="1">
    <source>
        <dbReference type="HAMAP-Rule" id="MF_01523"/>
    </source>
</evidence>
<gene>
    <name evidence="1" type="primary">rsmJ</name>
    <name type="ordered locus">swp_4895</name>
</gene>
<feature type="chain" id="PRO_0000383389" description="Ribosomal RNA small subunit methyltransferase J">
    <location>
        <begin position="1"/>
        <end position="271"/>
    </location>
</feature>
<feature type="binding site" evidence="1">
    <location>
        <begin position="116"/>
        <end position="117"/>
    </location>
    <ligand>
        <name>S-adenosyl-L-methionine</name>
        <dbReference type="ChEBI" id="CHEBI:59789"/>
    </ligand>
</feature>
<feature type="binding site" evidence="1">
    <location>
        <begin position="132"/>
        <end position="133"/>
    </location>
    <ligand>
        <name>S-adenosyl-L-methionine</name>
        <dbReference type="ChEBI" id="CHEBI:59789"/>
    </ligand>
</feature>
<feature type="binding site" evidence="1">
    <location>
        <begin position="168"/>
        <end position="169"/>
    </location>
    <ligand>
        <name>S-adenosyl-L-methionine</name>
        <dbReference type="ChEBI" id="CHEBI:59789"/>
    </ligand>
</feature>
<feature type="binding site" evidence="1">
    <location>
        <position position="190"/>
    </location>
    <ligand>
        <name>S-adenosyl-L-methionine</name>
        <dbReference type="ChEBI" id="CHEBI:59789"/>
    </ligand>
</feature>
<organism>
    <name type="scientific">Shewanella piezotolerans (strain WP3 / JCM 13877)</name>
    <dbReference type="NCBI Taxonomy" id="225849"/>
    <lineage>
        <taxon>Bacteria</taxon>
        <taxon>Pseudomonadati</taxon>
        <taxon>Pseudomonadota</taxon>
        <taxon>Gammaproteobacteria</taxon>
        <taxon>Alteromonadales</taxon>
        <taxon>Shewanellaceae</taxon>
        <taxon>Shewanella</taxon>
    </lineage>
</organism>
<dbReference type="EC" id="2.1.1.242" evidence="1"/>
<dbReference type="EMBL" id="CP000472">
    <property type="protein sequence ID" value="ACJ31516.1"/>
    <property type="molecule type" value="Genomic_DNA"/>
</dbReference>
<dbReference type="SMR" id="B8CV40"/>
<dbReference type="STRING" id="225849.swp_4895"/>
<dbReference type="KEGG" id="swp:swp_4895"/>
<dbReference type="eggNOG" id="COG0742">
    <property type="taxonomic scope" value="Bacteria"/>
</dbReference>
<dbReference type="HOGENOM" id="CLU_076324_0_0_6"/>
<dbReference type="Proteomes" id="UP000000753">
    <property type="component" value="Chromosome"/>
</dbReference>
<dbReference type="GO" id="GO:0005737">
    <property type="term" value="C:cytoplasm"/>
    <property type="evidence" value="ECO:0007669"/>
    <property type="project" value="UniProtKB-SubCell"/>
</dbReference>
<dbReference type="GO" id="GO:0008990">
    <property type="term" value="F:rRNA (guanine-N2-)-methyltransferase activity"/>
    <property type="evidence" value="ECO:0007669"/>
    <property type="project" value="UniProtKB-UniRule"/>
</dbReference>
<dbReference type="Gene3D" id="3.40.50.150">
    <property type="entry name" value="Vaccinia Virus protein VP39"/>
    <property type="match status" value="1"/>
</dbReference>
<dbReference type="Gene3D" id="3.40.1630.10">
    <property type="entry name" value="YhiQ-like domain"/>
    <property type="match status" value="1"/>
</dbReference>
<dbReference type="HAMAP" id="MF_01523">
    <property type="entry name" value="16SrRNA_methyltr_J"/>
    <property type="match status" value="1"/>
</dbReference>
<dbReference type="InterPro" id="IPR007536">
    <property type="entry name" value="16SrRNA_methylTrfase_J"/>
</dbReference>
<dbReference type="InterPro" id="IPR029063">
    <property type="entry name" value="SAM-dependent_MTases_sf"/>
</dbReference>
<dbReference type="PANTHER" id="PTHR36112">
    <property type="entry name" value="RIBOSOMAL RNA SMALL SUBUNIT METHYLTRANSFERASE J"/>
    <property type="match status" value="1"/>
</dbReference>
<dbReference type="PANTHER" id="PTHR36112:SF1">
    <property type="entry name" value="RIBOSOMAL RNA SMALL SUBUNIT METHYLTRANSFERASE J"/>
    <property type="match status" value="1"/>
</dbReference>
<dbReference type="Pfam" id="PF04445">
    <property type="entry name" value="SAM_MT"/>
    <property type="match status" value="1"/>
</dbReference>
<dbReference type="SUPFAM" id="SSF53335">
    <property type="entry name" value="S-adenosyl-L-methionine-dependent methyltransferases"/>
    <property type="match status" value="1"/>
</dbReference>